<comment type="function">
    <text>Disruption of the ure1 gene cluster suggests that it protects brucellae during their passage through the stomach. The major route of infection in human brucellosis is oral.</text>
</comment>
<comment type="catalytic activity">
    <reaction evidence="1">
        <text>urea + 2 H2O + H(+) = hydrogencarbonate + 2 NH4(+)</text>
        <dbReference type="Rhea" id="RHEA:20557"/>
        <dbReference type="ChEBI" id="CHEBI:15377"/>
        <dbReference type="ChEBI" id="CHEBI:15378"/>
        <dbReference type="ChEBI" id="CHEBI:16199"/>
        <dbReference type="ChEBI" id="CHEBI:17544"/>
        <dbReference type="ChEBI" id="CHEBI:28938"/>
        <dbReference type="EC" id="3.5.1.5"/>
    </reaction>
</comment>
<comment type="pathway">
    <text evidence="1">Nitrogen metabolism; urea degradation; CO(2) and NH(3) from urea (urease route): step 1/1.</text>
</comment>
<comment type="subunit">
    <text evidence="1">Heterotrimer of UreA (gamma), UreB (beta) and UreC (alpha) subunits. Three heterotrimers associate to form the active enzyme.</text>
</comment>
<comment type="subcellular location">
    <subcellularLocation>
        <location evidence="1">Cytoplasm</location>
    </subcellularLocation>
</comment>
<comment type="similarity">
    <text evidence="1">Belongs to the urease beta subunit family.</text>
</comment>
<name>URE21_BRUA2</name>
<organism>
    <name type="scientific">Brucella abortus (strain 2308)</name>
    <dbReference type="NCBI Taxonomy" id="359391"/>
    <lineage>
        <taxon>Bacteria</taxon>
        <taxon>Pseudomonadati</taxon>
        <taxon>Pseudomonadota</taxon>
        <taxon>Alphaproteobacteria</taxon>
        <taxon>Hyphomicrobiales</taxon>
        <taxon>Brucellaceae</taxon>
        <taxon>Brucella/Ochrobactrum group</taxon>
        <taxon>Brucella</taxon>
    </lineage>
</organism>
<gene>
    <name evidence="1" type="primary">ureB1</name>
    <name type="ordered locus">BAB1_0299</name>
</gene>
<feature type="chain" id="PRO_0000234234" description="Urease subunit beta 1">
    <location>
        <begin position="1"/>
        <end position="101"/>
    </location>
</feature>
<sequence>MIPGEIITLEGDIELNQGQPTVTMRVANTGDRPIQVGSHFHFYEVNAALSFDREKARGQRLDIAAGTAVRFEPGQERDVTLVPIRGHREIYGFRQMIMGKL</sequence>
<proteinExistence type="evidence at protein level"/>
<accession>Q2YPD6</accession>
<accession>Q57F86</accession>
<accession>Q93T82</accession>
<reference key="1">
    <citation type="journal article" date="2007" name="Infect. Immun.">
        <title>Characterization of the urease operon of Brucella abortus and assessment of its role in virulence of the bacterium.</title>
        <authorList>
            <person name="Sangari F.J."/>
            <person name="Seoane A."/>
            <person name="Rodriguez M.C."/>
            <person name="Aguero J."/>
            <person name="Garcia Lobo J.M."/>
        </authorList>
    </citation>
    <scope>NUCLEOTIDE SEQUENCE [GENOMIC DNA]</scope>
    <scope>CHARACTERIZATION OF ROLE IN VIRULENCE</scope>
</reference>
<reference key="2">
    <citation type="journal article" date="2005" name="Infect. Immun.">
        <title>Whole-genome analyses of speciation events in pathogenic Brucellae.</title>
        <authorList>
            <person name="Chain P.S."/>
            <person name="Comerci D.J."/>
            <person name="Tolmasky M.E."/>
            <person name="Larimer F.W."/>
            <person name="Malfatti S.A."/>
            <person name="Vergez L.M."/>
            <person name="Aguero F."/>
            <person name="Land M.L."/>
            <person name="Ugalde R.A."/>
            <person name="Garcia E."/>
        </authorList>
    </citation>
    <scope>NUCLEOTIDE SEQUENCE [LARGE SCALE GENOMIC DNA]</scope>
    <source>
        <strain>2308</strain>
    </source>
</reference>
<evidence type="ECO:0000255" key="1">
    <source>
        <dbReference type="HAMAP-Rule" id="MF_01954"/>
    </source>
</evidence>
<keyword id="KW-0963">Cytoplasm</keyword>
<keyword id="KW-0378">Hydrolase</keyword>
<keyword id="KW-1185">Reference proteome</keyword>
<keyword id="KW-0843">Virulence</keyword>
<dbReference type="EC" id="3.5.1.5" evidence="1"/>
<dbReference type="EMBL" id="AF361941">
    <property type="protein sequence ID" value="AAK51068.1"/>
    <property type="molecule type" value="Genomic_DNA"/>
</dbReference>
<dbReference type="EMBL" id="AM040264">
    <property type="protein sequence ID" value="CAJ10255.1"/>
    <property type="molecule type" value="Genomic_DNA"/>
</dbReference>
<dbReference type="RefSeq" id="WP_002963433.1">
    <property type="nucleotide sequence ID" value="NZ_KN046823.1"/>
</dbReference>
<dbReference type="SMR" id="Q2YPD6"/>
<dbReference type="STRING" id="359391.BAB1_0299"/>
<dbReference type="KEGG" id="bmf:BAB1_0299"/>
<dbReference type="PATRIC" id="fig|359391.11.peg.2347"/>
<dbReference type="HOGENOM" id="CLU_129707_1_1_5"/>
<dbReference type="PhylomeDB" id="Q2YPD6"/>
<dbReference type="UniPathway" id="UPA00258">
    <property type="reaction ID" value="UER00370"/>
</dbReference>
<dbReference type="Proteomes" id="UP000002719">
    <property type="component" value="Chromosome I"/>
</dbReference>
<dbReference type="GO" id="GO:0035550">
    <property type="term" value="C:urease complex"/>
    <property type="evidence" value="ECO:0007669"/>
    <property type="project" value="InterPro"/>
</dbReference>
<dbReference type="GO" id="GO:0009039">
    <property type="term" value="F:urease activity"/>
    <property type="evidence" value="ECO:0007669"/>
    <property type="project" value="UniProtKB-UniRule"/>
</dbReference>
<dbReference type="GO" id="GO:0043419">
    <property type="term" value="P:urea catabolic process"/>
    <property type="evidence" value="ECO:0007669"/>
    <property type="project" value="UniProtKB-UniRule"/>
</dbReference>
<dbReference type="CDD" id="cd00407">
    <property type="entry name" value="Urease_beta"/>
    <property type="match status" value="1"/>
</dbReference>
<dbReference type="FunFam" id="2.10.150.10:FF:000001">
    <property type="entry name" value="Urease subunit beta"/>
    <property type="match status" value="1"/>
</dbReference>
<dbReference type="Gene3D" id="2.10.150.10">
    <property type="entry name" value="Urease, beta subunit"/>
    <property type="match status" value="1"/>
</dbReference>
<dbReference type="HAMAP" id="MF_01954">
    <property type="entry name" value="Urease_beta"/>
    <property type="match status" value="1"/>
</dbReference>
<dbReference type="InterPro" id="IPR002019">
    <property type="entry name" value="Urease_beta-like"/>
</dbReference>
<dbReference type="InterPro" id="IPR036461">
    <property type="entry name" value="Urease_betasu_sf"/>
</dbReference>
<dbReference type="InterPro" id="IPR050069">
    <property type="entry name" value="Urease_subunit"/>
</dbReference>
<dbReference type="NCBIfam" id="NF009682">
    <property type="entry name" value="PRK13203.1"/>
    <property type="match status" value="1"/>
</dbReference>
<dbReference type="NCBIfam" id="TIGR00192">
    <property type="entry name" value="urease_beta"/>
    <property type="match status" value="1"/>
</dbReference>
<dbReference type="PANTHER" id="PTHR33569">
    <property type="entry name" value="UREASE"/>
    <property type="match status" value="1"/>
</dbReference>
<dbReference type="PANTHER" id="PTHR33569:SF1">
    <property type="entry name" value="UREASE"/>
    <property type="match status" value="1"/>
</dbReference>
<dbReference type="Pfam" id="PF00699">
    <property type="entry name" value="Urease_beta"/>
    <property type="match status" value="1"/>
</dbReference>
<dbReference type="SUPFAM" id="SSF51278">
    <property type="entry name" value="Urease, beta-subunit"/>
    <property type="match status" value="1"/>
</dbReference>
<protein>
    <recommendedName>
        <fullName evidence="1">Urease subunit beta 1</fullName>
        <ecNumber evidence="1">3.5.1.5</ecNumber>
    </recommendedName>
    <alternativeName>
        <fullName evidence="1">Urea amidohydrolase subunit beta 1</fullName>
    </alternativeName>
</protein>